<feature type="signal peptide" evidence="1">
    <location>
        <begin position="1"/>
        <end position="19"/>
    </location>
</feature>
<feature type="chain" id="PRO_0000000406" description="Acetylcholine-binding protein">
    <location>
        <begin position="20"/>
        <end position="229"/>
    </location>
</feature>
<feature type="domain" description="Ig-like">
    <location>
        <begin position="114"/>
        <end position="217"/>
    </location>
</feature>
<feature type="glycosylation site" description="N-linked (GlcNAc...) asparagine" evidence="4">
    <location>
        <position position="85"/>
    </location>
</feature>
<feature type="disulfide bond" evidence="2 3 8 9 10">
    <location>
        <begin position="142"/>
        <end position="155"/>
    </location>
</feature>
<feature type="disulfide bond" description="Interchain">
    <location>
        <position position="207"/>
    </location>
</feature>
<feature type="helix" evidence="15">
    <location>
        <begin position="22"/>
        <end position="32"/>
    </location>
</feature>
<feature type="strand" evidence="15">
    <location>
        <begin position="46"/>
        <end position="61"/>
    </location>
</feature>
<feature type="turn" evidence="15">
    <location>
        <begin position="62"/>
        <end position="65"/>
    </location>
</feature>
<feature type="strand" evidence="15">
    <location>
        <begin position="66"/>
        <end position="78"/>
    </location>
</feature>
<feature type="helix" evidence="15">
    <location>
        <begin position="80"/>
        <end position="82"/>
    </location>
</feature>
<feature type="strand" evidence="12">
    <location>
        <begin position="87"/>
        <end position="89"/>
    </location>
</feature>
<feature type="strand" evidence="15">
    <location>
        <begin position="91"/>
        <end position="96"/>
    </location>
</feature>
<feature type="helix" evidence="15">
    <location>
        <begin position="97"/>
        <end position="99"/>
    </location>
</feature>
<feature type="strand" evidence="15">
    <location>
        <begin position="105"/>
        <end position="107"/>
    </location>
</feature>
<feature type="strand" evidence="15">
    <location>
        <begin position="110"/>
        <end position="112"/>
    </location>
</feature>
<feature type="strand" evidence="15">
    <location>
        <begin position="121"/>
        <end position="125"/>
    </location>
</feature>
<feature type="strand" evidence="15">
    <location>
        <begin position="128"/>
        <end position="132"/>
    </location>
</feature>
<feature type="strand" evidence="15">
    <location>
        <begin position="135"/>
        <end position="141"/>
    </location>
</feature>
<feature type="turn" evidence="15">
    <location>
        <begin position="145"/>
        <end position="148"/>
    </location>
</feature>
<feature type="strand" evidence="15">
    <location>
        <begin position="149"/>
        <end position="151"/>
    </location>
</feature>
<feature type="strand" evidence="15">
    <location>
        <begin position="153"/>
        <end position="163"/>
    </location>
</feature>
<feature type="turn" evidence="15">
    <location>
        <begin position="166"/>
        <end position="168"/>
    </location>
</feature>
<feature type="strand" evidence="15">
    <location>
        <begin position="169"/>
        <end position="172"/>
    </location>
</feature>
<feature type="strand" evidence="14">
    <location>
        <begin position="176"/>
        <end position="178"/>
    </location>
</feature>
<feature type="turn" evidence="15">
    <location>
        <begin position="180"/>
        <end position="183"/>
    </location>
</feature>
<feature type="strand" evidence="15">
    <location>
        <begin position="188"/>
        <end position="203"/>
    </location>
</feature>
<feature type="strand" evidence="13">
    <location>
        <begin position="205"/>
        <end position="209"/>
    </location>
</feature>
<feature type="strand" evidence="15">
    <location>
        <begin position="210"/>
        <end position="222"/>
    </location>
</feature>
<feature type="turn" evidence="11">
    <location>
        <begin position="225"/>
        <end position="227"/>
    </location>
</feature>
<keyword id="KW-0002">3D-structure</keyword>
<keyword id="KW-0903">Direct protein sequencing</keyword>
<keyword id="KW-1015">Disulfide bond</keyword>
<keyword id="KW-0325">Glycoprotein</keyword>
<keyword id="KW-0393">Immunoglobulin domain</keyword>
<keyword id="KW-0675">Receptor</keyword>
<keyword id="KW-0964">Secreted</keyword>
<keyword id="KW-0732">Signal</keyword>
<keyword id="KW-0770">Synapse</keyword>
<sequence length="229" mass="26061">MRRNIFCLACLWIVQACLSLDRADILYNIRQTSRPDVIPTQRDRPVAVSVSLKFINILEVNEITNEVDVVFWQQTTWSDRTLAWNSSHSPDQVSVPISSLWVPDLAAYNAISKPEVLTPQLARVVSDGEVLYMPSIRQRFSCDVSGVDTESGATCRIKIGSWTHHSREISVDPTTENSDDSEYFSQYSRFEILDVTQKKNSVTYSCCPEAYEDVEVSLNFRKKGRSEIL</sequence>
<accession>P58154</accession>
<organism>
    <name type="scientific">Lymnaea stagnalis</name>
    <name type="common">Great pond snail</name>
    <name type="synonym">Helix stagnalis</name>
    <dbReference type="NCBI Taxonomy" id="6523"/>
    <lineage>
        <taxon>Eukaryota</taxon>
        <taxon>Metazoa</taxon>
        <taxon>Spiralia</taxon>
        <taxon>Lophotrochozoa</taxon>
        <taxon>Mollusca</taxon>
        <taxon>Gastropoda</taxon>
        <taxon>Heterobranchia</taxon>
        <taxon>Euthyneura</taxon>
        <taxon>Panpulmonata</taxon>
        <taxon>Hygrophila</taxon>
        <taxon>Lymnaeoidea</taxon>
        <taxon>Lymnaeidae</taxon>
        <taxon>Lymnaea</taxon>
    </lineage>
</organism>
<protein>
    <recommendedName>
        <fullName>Acetylcholine-binding protein</fullName>
        <shortName>ACh-binding protein</shortName>
        <shortName>AchBP</shortName>
    </recommendedName>
</protein>
<dbReference type="EMBL" id="AF364899">
    <property type="protein sequence ID" value="AAK64377.1"/>
    <property type="molecule type" value="mRNA"/>
</dbReference>
<dbReference type="PDB" id="1I9B">
    <property type="method" value="X-ray"/>
    <property type="resolution" value="2.70 A"/>
    <property type="chains" value="A/B/C/D/E=21-229"/>
</dbReference>
<dbReference type="PDB" id="1UV6">
    <property type="method" value="X-ray"/>
    <property type="resolution" value="2.50 A"/>
    <property type="chains" value="A/B/C/D/E/F/G/H/I/J=20-229"/>
</dbReference>
<dbReference type="PDB" id="1UW6">
    <property type="method" value="X-ray"/>
    <property type="resolution" value="2.20 A"/>
    <property type="chains" value="A/B/C/D/E/F/G/H/I/J/K/L/M/N/O/P/Q/R/S/T=21-229"/>
</dbReference>
<dbReference type="PDB" id="1UX2">
    <property type="method" value="X-ray"/>
    <property type="resolution" value="2.20 A"/>
    <property type="chains" value="A/B/C/D/E/F/G/H/I/J=21-229"/>
</dbReference>
<dbReference type="PDB" id="1YI5">
    <property type="method" value="X-ray"/>
    <property type="resolution" value="4.20 A"/>
    <property type="chains" value="A/B/C/D/E=20-229"/>
</dbReference>
<dbReference type="PDB" id="2ZJU">
    <property type="method" value="X-ray"/>
    <property type="resolution" value="2.58 A"/>
    <property type="chains" value="A/B/C/D/E=18-229"/>
</dbReference>
<dbReference type="PDB" id="2ZJV">
    <property type="method" value="X-ray"/>
    <property type="resolution" value="2.70 A"/>
    <property type="chains" value="A/B/C/D/E=18-229"/>
</dbReference>
<dbReference type="PDB" id="3U8J">
    <property type="method" value="X-ray"/>
    <property type="resolution" value="2.35 A"/>
    <property type="chains" value="A/B/C/D/E/F/G/H/I/J=20-229"/>
</dbReference>
<dbReference type="PDB" id="3U8K">
    <property type="method" value="X-ray"/>
    <property type="resolution" value="2.47 A"/>
    <property type="chains" value="A/B/C/D/E/F/G/H/I/J/K/L/M/N/O/P/Q/R/S/T=20-229"/>
</dbReference>
<dbReference type="PDB" id="3U8L">
    <property type="method" value="X-ray"/>
    <property type="resolution" value="2.32 A"/>
    <property type="chains" value="A/B/C/D/E/F/G/H/I/J=20-229"/>
</dbReference>
<dbReference type="PDB" id="3U8M">
    <property type="method" value="X-ray"/>
    <property type="resolution" value="2.70 A"/>
    <property type="chains" value="A/B/C/D/E/F/G/H/I/J/K/L/M/N/O/P/Q/R/S/T=20-229"/>
</dbReference>
<dbReference type="PDB" id="3U8N">
    <property type="method" value="X-ray"/>
    <property type="resolution" value="2.35 A"/>
    <property type="chains" value="A/B/C/D/E/F/G/H/I/J/K/L/M/N/O/P/Q/R/S/T=20-229"/>
</dbReference>
<dbReference type="PDB" id="3WIP">
    <property type="method" value="X-ray"/>
    <property type="resolution" value="2.60 A"/>
    <property type="chains" value="A/B/C/D/E/F/G/H/I/J=1-229"/>
</dbReference>
<dbReference type="PDB" id="3WTH">
    <property type="method" value="X-ray"/>
    <property type="resolution" value="2.54 A"/>
    <property type="chains" value="A/B/C/D/E=21-229"/>
</dbReference>
<dbReference type="PDB" id="3WTI">
    <property type="method" value="X-ray"/>
    <property type="resolution" value="2.68 A"/>
    <property type="chains" value="A/B/C/D/E=21-229"/>
</dbReference>
<dbReference type="PDB" id="3WTJ">
    <property type="method" value="X-ray"/>
    <property type="resolution" value="2.24 A"/>
    <property type="chains" value="A/B/C/D/E=21-229"/>
</dbReference>
<dbReference type="PDB" id="3WTK">
    <property type="method" value="X-ray"/>
    <property type="resolution" value="2.69 A"/>
    <property type="chains" value="A/B/C/D/E=21-229"/>
</dbReference>
<dbReference type="PDB" id="3WTL">
    <property type="method" value="X-ray"/>
    <property type="resolution" value="2.30 A"/>
    <property type="chains" value="A/B/C/D/E=21-229"/>
</dbReference>
<dbReference type="PDB" id="3WTM">
    <property type="method" value="X-ray"/>
    <property type="resolution" value="2.48 A"/>
    <property type="chains" value="A/B/C/D/E=21-229"/>
</dbReference>
<dbReference type="PDB" id="3WTN">
    <property type="method" value="X-ray"/>
    <property type="resolution" value="2.09 A"/>
    <property type="chains" value="A/B/C/D/E/F/G/H/I/J=21-229"/>
</dbReference>
<dbReference type="PDB" id="3WTO">
    <property type="method" value="X-ray"/>
    <property type="resolution" value="2.25 A"/>
    <property type="chains" value="A/B/C/D/E=21-229"/>
</dbReference>
<dbReference type="PDB" id="3ZDG">
    <property type="method" value="X-ray"/>
    <property type="resolution" value="2.48 A"/>
    <property type="chains" value="A/B/C/D/E/F/G/H/I/J/K/L/M/N/O/P/Q/R/S/T=20-229"/>
</dbReference>
<dbReference type="PDB" id="3ZDH">
    <property type="method" value="X-ray"/>
    <property type="resolution" value="2.20 A"/>
    <property type="chains" value="A/B/C/D/E/F/G/H/I/J=20-229"/>
</dbReference>
<dbReference type="PDB" id="4ALX">
    <property type="method" value="X-ray"/>
    <property type="resolution" value="2.30 A"/>
    <property type="chains" value="A/B/C/D/E/F/G/H/I/J=1-229"/>
</dbReference>
<dbReference type="PDB" id="4HQP">
    <property type="method" value="X-ray"/>
    <property type="resolution" value="3.51 A"/>
    <property type="chains" value="A/B/C/D/E=35-224"/>
</dbReference>
<dbReference type="PDB" id="4NZB">
    <property type="method" value="X-ray"/>
    <property type="resolution" value="2.68 A"/>
    <property type="chains" value="A/B/C/D/E/F/G/H/I/J/K/L/M/N/O=20-229"/>
</dbReference>
<dbReference type="PDB" id="4QAA">
    <property type="method" value="X-ray"/>
    <property type="resolution" value="2.70 A"/>
    <property type="chains" value="A/B/C/D/E/F/G/H/I/J=20-228"/>
</dbReference>
<dbReference type="PDB" id="4QAB">
    <property type="method" value="X-ray"/>
    <property type="resolution" value="2.98 A"/>
    <property type="chains" value="A/B/C/D/E/F/G/H/I/J=20-228"/>
</dbReference>
<dbReference type="PDB" id="4QAC">
    <property type="method" value="X-ray"/>
    <property type="resolution" value="2.10 A"/>
    <property type="chains" value="A/B/C/D/E/F/G/H/I/J=20-228"/>
</dbReference>
<dbReference type="PDB" id="4UM1">
    <property type="method" value="X-ray"/>
    <property type="resolution" value="2.83 A"/>
    <property type="chains" value="A/B/C/D/E=1-229"/>
</dbReference>
<dbReference type="PDB" id="4UM3">
    <property type="method" value="X-ray"/>
    <property type="resolution" value="2.70 A"/>
    <property type="chains" value="A/B/C/D/E/F/G/H/I/J/K/L/M/N/O/P/Q/R/S/T/U/V/W/X/Y/Z/a/b/c/d=1-229"/>
</dbReference>
<dbReference type="PDB" id="4ZJT">
    <property type="method" value="X-ray"/>
    <property type="resolution" value="1.85 A"/>
    <property type="chains" value="A/B/C/D/E/F/G/H/I/J=20-229"/>
</dbReference>
<dbReference type="PDB" id="4ZK1">
    <property type="method" value="X-ray"/>
    <property type="resolution" value="1.75 A"/>
    <property type="chains" value="A/B/C/D/E/F/G/H/I/J=20-229"/>
</dbReference>
<dbReference type="PDB" id="4ZR6">
    <property type="method" value="X-ray"/>
    <property type="resolution" value="2.60 A"/>
    <property type="chains" value="A/B/C/D/E=20-229"/>
</dbReference>
<dbReference type="PDB" id="4ZRU">
    <property type="method" value="X-ray"/>
    <property type="resolution" value="1.90 A"/>
    <property type="chains" value="A/B/C/D/E/F/G/H/I/J=20-229"/>
</dbReference>
<dbReference type="PDB" id="5AFH">
    <property type="method" value="X-ray"/>
    <property type="resolution" value="2.40 A"/>
    <property type="chains" value="A/B/C/D/E=35-224"/>
</dbReference>
<dbReference type="PDB" id="5AFJ">
    <property type="method" value="X-ray"/>
    <property type="resolution" value="2.20 A"/>
    <property type="chains" value="A/B/C/D/E=35-65, A/B/C/D/E=67-71, A/B/C/D/E=92-224"/>
</dbReference>
<dbReference type="PDB" id="5AFK">
    <property type="method" value="X-ray"/>
    <property type="resolution" value="2.38 A"/>
    <property type="chains" value="A/B/C/D/E=35-224"/>
</dbReference>
<dbReference type="PDB" id="5AFL">
    <property type="method" value="X-ray"/>
    <property type="resolution" value="2.38 A"/>
    <property type="chains" value="A/B/C/D/E=35-224"/>
</dbReference>
<dbReference type="PDB" id="5AFM">
    <property type="method" value="X-ray"/>
    <property type="resolution" value="2.85 A"/>
    <property type="chains" value="A/C/D/E=35-226"/>
</dbReference>
<dbReference type="PDB" id="5AFN">
    <property type="method" value="X-ray"/>
    <property type="resolution" value="2.15 A"/>
    <property type="chains" value="A/B/C/D/E=35-226"/>
</dbReference>
<dbReference type="PDB" id="5BP0">
    <property type="method" value="X-ray"/>
    <property type="resolution" value="2.40 A"/>
    <property type="chains" value="A/B/C/D/E/F/G/H/I/J=20-229"/>
</dbReference>
<dbReference type="PDB" id="5J5F">
    <property type="method" value="X-ray"/>
    <property type="resolution" value="2.04 A"/>
    <property type="chains" value="A/B/C/D/E/F/G/H/I/J=20-229"/>
</dbReference>
<dbReference type="PDB" id="5J5G">
    <property type="method" value="X-ray"/>
    <property type="resolution" value="2.04 A"/>
    <property type="chains" value="A/B/C/D/E/F/G/H/I/J=20-229"/>
</dbReference>
<dbReference type="PDB" id="5J5H">
    <property type="method" value="X-ray"/>
    <property type="resolution" value="2.70 A"/>
    <property type="chains" value="A/B/C/D/E/F/G/H/I/J=20-229"/>
</dbReference>
<dbReference type="PDB" id="5J5I">
    <property type="method" value="X-ray"/>
    <property type="resolution" value="2.33 A"/>
    <property type="chains" value="A/B/C/D/E/F/G/H/I/J=20-229"/>
</dbReference>
<dbReference type="PDB" id="5T90">
    <property type="method" value="X-ray"/>
    <property type="resolution" value="2.80 A"/>
    <property type="chains" value="A/B/C/D/E=20-229"/>
</dbReference>
<dbReference type="PDB" id="5Y2Q">
    <property type="method" value="X-ray"/>
    <property type="resolution" value="2.36 A"/>
    <property type="chains" value="A/B/C/D/E=21-229"/>
</dbReference>
<dbReference type="PDB" id="7DJI">
    <property type="method" value="X-ray"/>
    <property type="resolution" value="2.20 A"/>
    <property type="chains" value="A/B/C/D/E=21-229"/>
</dbReference>
<dbReference type="PDB" id="7N0W">
    <property type="method" value="X-ray"/>
    <property type="resolution" value="2.46 A"/>
    <property type="chains" value="A/B/C/D/E=20-224"/>
</dbReference>
<dbReference type="PDB" id="7N0Y">
    <property type="method" value="X-ray"/>
    <property type="resolution" value="2.58 A"/>
    <property type="chains" value="A/B/C/D/E=20-224"/>
</dbReference>
<dbReference type="PDB" id="7N43">
    <property type="method" value="X-ray"/>
    <property type="resolution" value="2.47 A"/>
    <property type="chains" value="A/B/C/D/E=20-229"/>
</dbReference>
<dbReference type="PDB" id="7NDP">
    <property type="method" value="X-ray"/>
    <property type="resolution" value="2.00 A"/>
    <property type="chains" value="A/B/C/D/E/F/G/H/I/J=1-229"/>
</dbReference>
<dbReference type="PDB" id="7NDV">
    <property type="method" value="X-ray"/>
    <property type="resolution" value="1.70 A"/>
    <property type="chains" value="A/B/C/D/E/F/G/H/I/J=1-229"/>
</dbReference>
<dbReference type="PDB" id="7PD6">
    <property type="method" value="X-ray"/>
    <property type="resolution" value="2.00 A"/>
    <property type="chains" value="AaA/BaB/CaC/DaD/EaE/FaF/GaG/HaH/IaI/JJJ=21-229"/>
</dbReference>
<dbReference type="PDB" id="7PDB">
    <property type="method" value="X-ray"/>
    <property type="resolution" value="2.33 A"/>
    <property type="chains" value="AaA/BaB/CaC/DaD/EaE=21-229"/>
</dbReference>
<dbReference type="PDB" id="7PDR">
    <property type="method" value="X-ray"/>
    <property type="resolution" value="2.33 A"/>
    <property type="chains" value="AaA/BaB/CaC/DaD/EaE=21-229"/>
</dbReference>
<dbReference type="PDB" id="7PE5">
    <property type="method" value="X-ray"/>
    <property type="resolution" value="2.10 A"/>
    <property type="chains" value="AaA/BaB/CaC/DaD/EaE=21-229"/>
</dbReference>
<dbReference type="PDB" id="7PE6">
    <property type="method" value="X-ray"/>
    <property type="resolution" value="2.01 A"/>
    <property type="chains" value="AaA/BaB/CaC/DaD/EaE=21-229"/>
</dbReference>
<dbReference type="PDB" id="7TXF">
    <property type="method" value="X-ray"/>
    <property type="resolution" value="2.47 A"/>
    <property type="chains" value="A/B/C/D/E=20-224"/>
</dbReference>
<dbReference type="PDB" id="8P11">
    <property type="method" value="X-ray"/>
    <property type="resolution" value="1.90 A"/>
    <property type="chains" value="A/B/C/D/E/F/G/H/I/J=1-229"/>
</dbReference>
<dbReference type="PDB" id="8P1E">
    <property type="method" value="X-ray"/>
    <property type="resolution" value="2.10 A"/>
    <property type="chains" value="A/B/C/D/E/F/G/H/I/J=1-229"/>
</dbReference>
<dbReference type="PDB" id="8P1F">
    <property type="method" value="X-ray"/>
    <property type="resolution" value="2.10 A"/>
    <property type="chains" value="A/B/C/D/E/F/G/H/I/J/K/L/M/N/O/P/Q/R/S/T=1-229"/>
</dbReference>
<dbReference type="PDB" id="8P22">
    <property type="method" value="X-ray"/>
    <property type="resolution" value="2.20 A"/>
    <property type="chains" value="A/B/C/D/E/F/G/H/I/J=20-224"/>
</dbReference>
<dbReference type="PDB" id="8Q1T">
    <property type="method" value="X-ray"/>
    <property type="resolution" value="3.00 A"/>
    <property type="chains" value="A/B/C/D/E/F/G/H/I/J=20-225"/>
</dbReference>
<dbReference type="PDB" id="8XSW">
    <property type="method" value="X-ray"/>
    <property type="resolution" value="2.60 A"/>
    <property type="chains" value="A/B/C/D/E=19-227"/>
</dbReference>
<dbReference type="PDBsum" id="1I9B"/>
<dbReference type="PDBsum" id="1UV6"/>
<dbReference type="PDBsum" id="1UW6"/>
<dbReference type="PDBsum" id="1UX2"/>
<dbReference type="PDBsum" id="1YI5"/>
<dbReference type="PDBsum" id="2ZJU"/>
<dbReference type="PDBsum" id="2ZJV"/>
<dbReference type="PDBsum" id="3U8J"/>
<dbReference type="PDBsum" id="3U8K"/>
<dbReference type="PDBsum" id="3U8L"/>
<dbReference type="PDBsum" id="3U8M"/>
<dbReference type="PDBsum" id="3U8N"/>
<dbReference type="PDBsum" id="3WIP"/>
<dbReference type="PDBsum" id="3WTH"/>
<dbReference type="PDBsum" id="3WTI"/>
<dbReference type="PDBsum" id="3WTJ"/>
<dbReference type="PDBsum" id="3WTK"/>
<dbReference type="PDBsum" id="3WTL"/>
<dbReference type="PDBsum" id="3WTM"/>
<dbReference type="PDBsum" id="3WTN"/>
<dbReference type="PDBsum" id="3WTO"/>
<dbReference type="PDBsum" id="3ZDG"/>
<dbReference type="PDBsum" id="3ZDH"/>
<dbReference type="PDBsum" id="4ALX"/>
<dbReference type="PDBsum" id="4HQP"/>
<dbReference type="PDBsum" id="4NZB"/>
<dbReference type="PDBsum" id="4QAA"/>
<dbReference type="PDBsum" id="4QAB"/>
<dbReference type="PDBsum" id="4QAC"/>
<dbReference type="PDBsum" id="4UM1"/>
<dbReference type="PDBsum" id="4UM3"/>
<dbReference type="PDBsum" id="4ZJT"/>
<dbReference type="PDBsum" id="4ZK1"/>
<dbReference type="PDBsum" id="4ZR6"/>
<dbReference type="PDBsum" id="4ZRU"/>
<dbReference type="PDBsum" id="5AFH"/>
<dbReference type="PDBsum" id="5AFJ"/>
<dbReference type="PDBsum" id="5AFK"/>
<dbReference type="PDBsum" id="5AFL"/>
<dbReference type="PDBsum" id="5AFM"/>
<dbReference type="PDBsum" id="5AFN"/>
<dbReference type="PDBsum" id="5BP0"/>
<dbReference type="PDBsum" id="5J5F"/>
<dbReference type="PDBsum" id="5J5G"/>
<dbReference type="PDBsum" id="5J5H"/>
<dbReference type="PDBsum" id="5J5I"/>
<dbReference type="PDBsum" id="5T90"/>
<dbReference type="PDBsum" id="5Y2Q"/>
<dbReference type="PDBsum" id="7DJI"/>
<dbReference type="PDBsum" id="7N0W"/>
<dbReference type="PDBsum" id="7N0Y"/>
<dbReference type="PDBsum" id="7N43"/>
<dbReference type="PDBsum" id="7NDP"/>
<dbReference type="PDBsum" id="7NDV"/>
<dbReference type="PDBsum" id="7PD6"/>
<dbReference type="PDBsum" id="7PDB"/>
<dbReference type="PDBsum" id="7PDR"/>
<dbReference type="PDBsum" id="7PE5"/>
<dbReference type="PDBsum" id="7PE6"/>
<dbReference type="PDBsum" id="7TXF"/>
<dbReference type="PDBsum" id="8P11"/>
<dbReference type="PDBsum" id="8P1E"/>
<dbReference type="PDBsum" id="8P1F"/>
<dbReference type="PDBsum" id="8P22"/>
<dbReference type="PDBsum" id="8Q1T"/>
<dbReference type="PDBsum" id="8XSW"/>
<dbReference type="SMR" id="P58154"/>
<dbReference type="ComplexPortal" id="CPX-259">
    <property type="entry name" value="Acetylcholine binding protein complex"/>
</dbReference>
<dbReference type="DIP" id="DIP-43985N"/>
<dbReference type="IntAct" id="P58154">
    <property type="interactions" value="3"/>
</dbReference>
<dbReference type="MINT" id="P58154"/>
<dbReference type="BindingDB" id="P58154"/>
<dbReference type="ChEMBL" id="CHEMBL6084"/>
<dbReference type="DrugCentral" id="P58154"/>
<dbReference type="TCDB" id="1.A.9.1.19">
    <property type="family name" value="the neurotransmitter receptor, cys loop, ligand-gated ion channel (lic) family"/>
</dbReference>
<dbReference type="EvolutionaryTrace" id="P58154"/>
<dbReference type="GO" id="GO:0016020">
    <property type="term" value="C:membrane"/>
    <property type="evidence" value="ECO:0007669"/>
    <property type="project" value="InterPro"/>
</dbReference>
<dbReference type="GO" id="GO:0045202">
    <property type="term" value="C:synapse"/>
    <property type="evidence" value="ECO:0007669"/>
    <property type="project" value="UniProtKB-KW"/>
</dbReference>
<dbReference type="GO" id="GO:0043083">
    <property type="term" value="C:synaptic cleft"/>
    <property type="evidence" value="ECO:0007669"/>
    <property type="project" value="UniProtKB-SubCell"/>
</dbReference>
<dbReference type="GO" id="GO:0005230">
    <property type="term" value="F:extracellular ligand-gated monoatomic ion channel activity"/>
    <property type="evidence" value="ECO:0007669"/>
    <property type="project" value="InterPro"/>
</dbReference>
<dbReference type="GO" id="GO:0004888">
    <property type="term" value="F:transmembrane signaling receptor activity"/>
    <property type="evidence" value="ECO:0007669"/>
    <property type="project" value="InterPro"/>
</dbReference>
<dbReference type="CDD" id="cd18995">
    <property type="entry name" value="LGIC_AChBP"/>
    <property type="match status" value="1"/>
</dbReference>
<dbReference type="Gene3D" id="2.70.170.10">
    <property type="entry name" value="Neurotransmitter-gated ion-channel ligand-binding domain"/>
    <property type="match status" value="1"/>
</dbReference>
<dbReference type="InterPro" id="IPR007110">
    <property type="entry name" value="Ig-like_dom"/>
</dbReference>
<dbReference type="InterPro" id="IPR006202">
    <property type="entry name" value="Neur_chan_lig-bd"/>
</dbReference>
<dbReference type="InterPro" id="IPR036734">
    <property type="entry name" value="Neur_chan_lig-bd_sf"/>
</dbReference>
<dbReference type="InterPro" id="IPR006201">
    <property type="entry name" value="Neur_channel"/>
</dbReference>
<dbReference type="PANTHER" id="PTHR18945">
    <property type="entry name" value="NEUROTRANSMITTER GATED ION CHANNEL"/>
    <property type="match status" value="1"/>
</dbReference>
<dbReference type="Pfam" id="PF02931">
    <property type="entry name" value="Neur_chan_LBD"/>
    <property type="match status" value="1"/>
</dbReference>
<dbReference type="SUPFAM" id="SSF63712">
    <property type="entry name" value="Nicotinic receptor ligand binding domain-like"/>
    <property type="match status" value="1"/>
</dbReference>
<dbReference type="PROSITE" id="PS50835">
    <property type="entry name" value="IG_LIKE"/>
    <property type="match status" value="1"/>
</dbReference>
<name>ACHP_LYMST</name>
<reference key="1">
    <citation type="journal article" date="2001" name="Nature">
        <title>A glia-derived acetylcholine-binding protein that modulates synaptic transmission.</title>
        <authorList>
            <person name="Smit A.B."/>
            <person name="Syed N.I."/>
            <person name="Schaap D."/>
            <person name="van Minnen J."/>
            <person name="Klumperman J."/>
            <person name="Kits K.S."/>
            <person name="Lodder H."/>
            <person name="van Der Schors R.C."/>
            <person name="van Elk R."/>
            <person name="Sorgedrager B."/>
            <person name="Brejc K."/>
            <person name="Sixma T.K."/>
            <person name="Geraerts W.P.M."/>
        </authorList>
    </citation>
    <scope>NUCLEOTIDE SEQUENCE [MRNA]</scope>
    <scope>PROTEIN SEQUENCE OF 20-30</scope>
    <scope>MASS SPECTROMETRY</scope>
    <scope>SUBCELLULAR LOCATION</scope>
    <source>
        <tissue>CNS</tissue>
    </source>
</reference>
<reference key="2">
    <citation type="journal article" date="2001" name="Nature">
        <title>Crystal structure of an ACh-binding protein reveals the ligand-binding domain of nicotinic receptors.</title>
        <authorList>
            <person name="Brejc K."/>
            <person name="van Dijk W.J."/>
            <person name="Klaassen R.V."/>
            <person name="Schuurmans M."/>
            <person name="van Der Oost J."/>
            <person name="Smit A.B."/>
            <person name="Sixma T.K."/>
        </authorList>
    </citation>
    <scope>X-RAY CRYSTALLOGRAPHY (2.7 ANGSTROMS) OF 20-229</scope>
</reference>
<reference evidence="5 6" key="3">
    <citation type="journal article" date="2021" name="Sci. Rep.">
        <title>Rigidity of loop 1 contributes to equipotency of globular and ribbon isomers of alpha-conotoxin AusIA.</title>
        <authorList>
            <person name="Ho T.N.T."/>
            <person name="Abraham N."/>
            <person name="Lewis R.J."/>
        </authorList>
    </citation>
    <scope>X-RAY CRYSTALLOGRAPHY (2.46 ANGSTROMS) IN COMPLEX WITH ALPHA-CONOTOXIN AUSIA</scope>
</reference>
<reference evidence="7" key="4">
    <citation type="journal article" date="2023" name="Front. Pharmacol.">
        <title>Unravelling the allosteric binding mode of alphaD-VxXXB at nicotinic acetylcholine receptors.</title>
        <authorList>
            <person name="Ho T.N."/>
            <person name="Abraham N."/>
            <person name="Lewis R.J."/>
        </authorList>
    </citation>
    <scope>X-RAY CRYSTALLOGRAPHY (2.47 ANGSTROMS) OF 20-224 IN COMPLEX WITH C-TERMINAL DOMAIN OF ALPHA-CONOTOXIN VXXXB</scope>
    <scope>DISULFIDE BOND</scope>
</reference>
<comment type="function">
    <text>Binds to acetylcholine. Modulates neuronal synaptic transmission.</text>
</comment>
<comment type="subunit">
    <text>Homopentamer.</text>
</comment>
<comment type="subcellular location">
    <subcellularLocation>
        <location evidence="1">Synaptic cleft</location>
    </subcellularLocation>
    <text evidence="1">Released in an acetylcholine-dependent manner in the synaptic cleft.</text>
</comment>
<comment type="tissue specificity">
    <text>Expressed by glial cells.</text>
</comment>
<comment type="PTM">
    <text>N-glycosylated.</text>
</comment>
<comment type="mass spectrometry" mass="24720.4" method="Electrospray" evidence="1"/>
<comment type="similarity">
    <text evidence="4">To the extracellular portion of ligand-gated ionic channels family.</text>
</comment>
<evidence type="ECO:0000269" key="1">
    <source>
    </source>
</evidence>
<evidence type="ECO:0000269" key="2">
    <source>
    </source>
</evidence>
<evidence type="ECO:0000269" key="3">
    <source>
    </source>
</evidence>
<evidence type="ECO:0000305" key="4"/>
<evidence type="ECO:0000312" key="5">
    <source>
        <dbReference type="PDB" id="7N0W"/>
    </source>
</evidence>
<evidence type="ECO:0000312" key="6">
    <source>
        <dbReference type="PDB" id="7N0Y"/>
    </source>
</evidence>
<evidence type="ECO:0000312" key="7">
    <source>
        <dbReference type="PDB" id="7TXF"/>
    </source>
</evidence>
<evidence type="ECO:0007744" key="8">
    <source>
        <dbReference type="PDB" id="7N0W"/>
    </source>
</evidence>
<evidence type="ECO:0007744" key="9">
    <source>
        <dbReference type="PDB" id="7N0Y"/>
    </source>
</evidence>
<evidence type="ECO:0007744" key="10">
    <source>
        <dbReference type="PDB" id="7TXF"/>
    </source>
</evidence>
<evidence type="ECO:0007829" key="11">
    <source>
        <dbReference type="PDB" id="3U8K"/>
    </source>
</evidence>
<evidence type="ECO:0007829" key="12">
    <source>
        <dbReference type="PDB" id="3WTH"/>
    </source>
</evidence>
<evidence type="ECO:0007829" key="13">
    <source>
        <dbReference type="PDB" id="3WTM"/>
    </source>
</evidence>
<evidence type="ECO:0007829" key="14">
    <source>
        <dbReference type="PDB" id="5J5G"/>
    </source>
</evidence>
<evidence type="ECO:0007829" key="15">
    <source>
        <dbReference type="PDB" id="7NDV"/>
    </source>
</evidence>
<proteinExistence type="evidence at protein level"/>